<reference key="1">
    <citation type="journal article" date="2009" name="Genome Res.">
        <title>Comparative genomic analyses of the human fungal pathogens Coccidioides and their relatives.</title>
        <authorList>
            <person name="Sharpton T.J."/>
            <person name="Stajich J.E."/>
            <person name="Rounsley S.D."/>
            <person name="Gardner M.J."/>
            <person name="Wortman J.R."/>
            <person name="Jordar V.S."/>
            <person name="Maiti R."/>
            <person name="Kodira C.D."/>
            <person name="Neafsey D.E."/>
            <person name="Zeng Q."/>
            <person name="Hung C.-Y."/>
            <person name="McMahan C."/>
            <person name="Muszewska A."/>
            <person name="Grynberg M."/>
            <person name="Mandel M.A."/>
            <person name="Kellner E.M."/>
            <person name="Barker B.M."/>
            <person name="Galgiani J.N."/>
            <person name="Orbach M.J."/>
            <person name="Kirkland T.N."/>
            <person name="Cole G.T."/>
            <person name="Henn M.R."/>
            <person name="Birren B.W."/>
            <person name="Taylor J.W."/>
        </authorList>
    </citation>
    <scope>NUCLEOTIDE SEQUENCE [LARGE SCALE GENOMIC DNA]</scope>
    <source>
        <strain>UAMH 1704</strain>
    </source>
</reference>
<organism>
    <name type="scientific">Uncinocarpus reesii (strain UAMH 1704)</name>
    <dbReference type="NCBI Taxonomy" id="336963"/>
    <lineage>
        <taxon>Eukaryota</taxon>
        <taxon>Fungi</taxon>
        <taxon>Dikarya</taxon>
        <taxon>Ascomycota</taxon>
        <taxon>Pezizomycotina</taxon>
        <taxon>Eurotiomycetes</taxon>
        <taxon>Eurotiomycetidae</taxon>
        <taxon>Onygenales</taxon>
        <taxon>Onygenaceae</taxon>
        <taxon>Uncinocarpus</taxon>
    </lineage>
</organism>
<gene>
    <name type="ORF">UREG_07123</name>
</gene>
<keyword id="KW-0031">Aminopeptidase</keyword>
<keyword id="KW-0378">Hydrolase</keyword>
<keyword id="KW-0464">Manganese</keyword>
<keyword id="KW-0479">Metal-binding</keyword>
<keyword id="KW-0482">Metalloprotease</keyword>
<keyword id="KW-0645">Protease</keyword>
<keyword id="KW-1185">Reference proteome</keyword>
<evidence type="ECO:0000250" key="1"/>
<evidence type="ECO:0000305" key="2"/>
<name>AMPP2_UNCRE</name>
<protein>
    <recommendedName>
        <fullName>Probable Xaa-Pro aminopeptidase UREG_07123</fullName>
        <ecNumber>3.4.11.9</ecNumber>
    </recommendedName>
    <alternativeName>
        <fullName>Aminoacylproline aminopeptidase</fullName>
    </alternativeName>
    <alternativeName>
        <fullName>Prolidase</fullName>
    </alternativeName>
</protein>
<accession>C4JY72</accession>
<feature type="chain" id="PRO_0000411856" description="Probable Xaa-Pro aminopeptidase UREG_07123">
    <location>
        <begin position="1"/>
        <end position="413"/>
    </location>
</feature>
<feature type="binding site" evidence="1">
    <location>
        <position position="194"/>
    </location>
    <ligand>
        <name>Mn(2+)</name>
        <dbReference type="ChEBI" id="CHEBI:29035"/>
        <label>2</label>
    </ligand>
</feature>
<feature type="binding site" evidence="1">
    <location>
        <position position="205"/>
    </location>
    <ligand>
        <name>Mn(2+)</name>
        <dbReference type="ChEBI" id="CHEBI:29035"/>
        <label>1</label>
    </ligand>
</feature>
<feature type="binding site" evidence="1">
    <location>
        <position position="205"/>
    </location>
    <ligand>
        <name>Mn(2+)</name>
        <dbReference type="ChEBI" id="CHEBI:29035"/>
        <label>2</label>
    </ligand>
</feature>
<feature type="binding site" evidence="1">
    <location>
        <position position="340"/>
    </location>
    <ligand>
        <name>Mn(2+)</name>
        <dbReference type="ChEBI" id="CHEBI:29035"/>
        <label>1</label>
    </ligand>
</feature>
<feature type="binding site" evidence="1">
    <location>
        <position position="379"/>
    </location>
    <ligand>
        <name>Mn(2+)</name>
        <dbReference type="ChEBI" id="CHEBI:29035"/>
        <label>1</label>
    </ligand>
</feature>
<feature type="binding site" evidence="1">
    <location>
        <position position="379"/>
    </location>
    <ligand>
        <name>Mn(2+)</name>
        <dbReference type="ChEBI" id="CHEBI:29035"/>
        <label>2</label>
    </ligand>
</feature>
<sequence>MSGVAEPDCYLTYDITSDTLTLYVPDFDLRRAIWMGPTLGLAEARERYNIDQAKYRSTLEQDILDWASRRAIGSVIYVIHDNQKPVVPFPYLKFNHEDLIPAMDTCREIKDGHEIGLIRRANEISTSAHTEILRNISGMRNEAEIQGKFLDSCVSLGAKNQSYEIIAASGENAAVLHYTRNDEPLKGRQLVCLDAGAEWNCYASDVTRTFPMQPRWPSAEAFSVYSVVQRMQEECIKRISEGVRYLDLHILAHKIAIEELLRLGIFRGGSIAEILKSGASLVFFPHGLGHHVGLEVHDVSGRSLMALEEQEYQGLPLRGCRAPCTLSAPHLRAGMVVTVEPGIYFSRLALDDAKQKPLSKYIDMQLVAEYIPVGGVRIEDDVLVTRDGWENLTSAPKGRAMLDIIGEGARLRA</sequence>
<dbReference type="EC" id="3.4.11.9"/>
<dbReference type="EMBL" id="CH476619">
    <property type="protein sequence ID" value="EEP82258.1"/>
    <property type="molecule type" value="Genomic_DNA"/>
</dbReference>
<dbReference type="RefSeq" id="XP_002582350.1">
    <property type="nucleotide sequence ID" value="XM_002582304.1"/>
</dbReference>
<dbReference type="SMR" id="C4JY72"/>
<dbReference type="STRING" id="336963.C4JY72"/>
<dbReference type="GeneID" id="8444567"/>
<dbReference type="KEGG" id="ure:UREG_07123"/>
<dbReference type="VEuPathDB" id="FungiDB:UREG_07123"/>
<dbReference type="eggNOG" id="KOG2737">
    <property type="taxonomic scope" value="Eukaryota"/>
</dbReference>
<dbReference type="HOGENOM" id="CLU_017266_1_2_1"/>
<dbReference type="InParanoid" id="C4JY72"/>
<dbReference type="OMA" id="YELRMIR"/>
<dbReference type="OrthoDB" id="10261878at2759"/>
<dbReference type="Proteomes" id="UP000002058">
    <property type="component" value="Unassembled WGS sequence"/>
</dbReference>
<dbReference type="GO" id="GO:0030145">
    <property type="term" value="F:manganese ion binding"/>
    <property type="evidence" value="ECO:0007669"/>
    <property type="project" value="InterPro"/>
</dbReference>
<dbReference type="GO" id="GO:0070006">
    <property type="term" value="F:metalloaminopeptidase activity"/>
    <property type="evidence" value="ECO:0007669"/>
    <property type="project" value="InterPro"/>
</dbReference>
<dbReference type="GO" id="GO:0006508">
    <property type="term" value="P:proteolysis"/>
    <property type="evidence" value="ECO:0007669"/>
    <property type="project" value="UniProtKB-KW"/>
</dbReference>
<dbReference type="CDD" id="cd01087">
    <property type="entry name" value="Prolidase"/>
    <property type="match status" value="1"/>
</dbReference>
<dbReference type="Gene3D" id="3.90.230.10">
    <property type="entry name" value="Creatinase/methionine aminopeptidase superfamily"/>
    <property type="match status" value="1"/>
</dbReference>
<dbReference type="Gene3D" id="3.40.350.10">
    <property type="entry name" value="Creatinase/prolidase N-terminal domain"/>
    <property type="match status" value="1"/>
</dbReference>
<dbReference type="InterPro" id="IPR007865">
    <property type="entry name" value="Aminopep_P_N"/>
</dbReference>
<dbReference type="InterPro" id="IPR029149">
    <property type="entry name" value="Creatin/AminoP/Spt16_N"/>
</dbReference>
<dbReference type="InterPro" id="IPR036005">
    <property type="entry name" value="Creatinase/aminopeptidase-like"/>
</dbReference>
<dbReference type="InterPro" id="IPR000994">
    <property type="entry name" value="Pept_M24"/>
</dbReference>
<dbReference type="InterPro" id="IPR001131">
    <property type="entry name" value="Peptidase_M24B_aminopep-P_CS"/>
</dbReference>
<dbReference type="InterPro" id="IPR052433">
    <property type="entry name" value="X-Pro_dipept-like"/>
</dbReference>
<dbReference type="PANTHER" id="PTHR43226">
    <property type="entry name" value="XAA-PRO AMINOPEPTIDASE 3"/>
    <property type="match status" value="1"/>
</dbReference>
<dbReference type="PANTHER" id="PTHR43226:SF3">
    <property type="entry name" value="XAA-PRO AMINOPEPTIDASE AN0832-RELATED"/>
    <property type="match status" value="1"/>
</dbReference>
<dbReference type="Pfam" id="PF05195">
    <property type="entry name" value="AMP_N"/>
    <property type="match status" value="1"/>
</dbReference>
<dbReference type="Pfam" id="PF00557">
    <property type="entry name" value="Peptidase_M24"/>
    <property type="match status" value="1"/>
</dbReference>
<dbReference type="SUPFAM" id="SSF55920">
    <property type="entry name" value="Creatinase/aminopeptidase"/>
    <property type="match status" value="1"/>
</dbReference>
<dbReference type="SUPFAM" id="SSF53092">
    <property type="entry name" value="Creatinase/prolidase N-terminal domain"/>
    <property type="match status" value="1"/>
</dbReference>
<dbReference type="PROSITE" id="PS00491">
    <property type="entry name" value="PROLINE_PEPTIDASE"/>
    <property type="match status" value="1"/>
</dbReference>
<comment type="function">
    <text evidence="1">Catalyzes the removal of a penultimate prolyl residue from the N-termini of peptides.</text>
</comment>
<comment type="catalytic activity">
    <reaction>
        <text>Release of any N-terminal amino acid, including proline, that is linked to proline, even from a dipeptide or tripeptide.</text>
        <dbReference type="EC" id="3.4.11.9"/>
    </reaction>
</comment>
<comment type="cofactor">
    <cofactor evidence="1">
        <name>Mn(2+)</name>
        <dbReference type="ChEBI" id="CHEBI:29035"/>
    </cofactor>
    <text evidence="1">Binds 2 manganese ions per subunit.</text>
</comment>
<comment type="similarity">
    <text evidence="2">Belongs to the peptidase M24B family.</text>
</comment>
<proteinExistence type="inferred from homology"/>